<organism>
    <name type="scientific">Bacillus anthracis</name>
    <dbReference type="NCBI Taxonomy" id="1392"/>
    <lineage>
        <taxon>Bacteria</taxon>
        <taxon>Bacillati</taxon>
        <taxon>Bacillota</taxon>
        <taxon>Bacilli</taxon>
        <taxon>Bacillales</taxon>
        <taxon>Bacillaceae</taxon>
        <taxon>Bacillus</taxon>
        <taxon>Bacillus cereus group</taxon>
    </lineage>
</organism>
<feature type="chain" id="PRO_0000271974" description="Bacilliredoxin BA_4378/GBAA_4378/BAS4061">
    <location>
        <begin position="1"/>
        <end position="144"/>
    </location>
</feature>
<comment type="similarity">
    <text evidence="1">Belongs to the bacilliredoxin family.</text>
</comment>
<sequence>MINFNFFMNDVVRQAREEIVSAGYTELTTPEAVDEAFKRNGTTLVMVNSVCGCAGGIARPAAAHSVHYDKRPNHLVTVFAGQDKEATARAREYFEGYPPSSPSFALLKDGKIVTMVERHEIEGHEPMQVIAKLQSYFEENCEEL</sequence>
<reference key="1">
    <citation type="journal article" date="2003" name="Nature">
        <title>The genome sequence of Bacillus anthracis Ames and comparison to closely related bacteria.</title>
        <authorList>
            <person name="Read T.D."/>
            <person name="Peterson S.N."/>
            <person name="Tourasse N.J."/>
            <person name="Baillie L.W."/>
            <person name="Paulsen I.T."/>
            <person name="Nelson K.E."/>
            <person name="Tettelin H."/>
            <person name="Fouts D.E."/>
            <person name="Eisen J.A."/>
            <person name="Gill S.R."/>
            <person name="Holtzapple E.K."/>
            <person name="Okstad O.A."/>
            <person name="Helgason E."/>
            <person name="Rilstone J."/>
            <person name="Wu M."/>
            <person name="Kolonay J.F."/>
            <person name="Beanan M.J."/>
            <person name="Dodson R.J."/>
            <person name="Brinkac L.M."/>
            <person name="Gwinn M.L."/>
            <person name="DeBoy R.T."/>
            <person name="Madpu R."/>
            <person name="Daugherty S.C."/>
            <person name="Durkin A.S."/>
            <person name="Haft D.H."/>
            <person name="Nelson W.C."/>
            <person name="Peterson J.D."/>
            <person name="Pop M."/>
            <person name="Khouri H.M."/>
            <person name="Radune D."/>
            <person name="Benton J.L."/>
            <person name="Mahamoud Y."/>
            <person name="Jiang L."/>
            <person name="Hance I.R."/>
            <person name="Weidman J.F."/>
            <person name="Berry K.J."/>
            <person name="Plaut R.D."/>
            <person name="Wolf A.M."/>
            <person name="Watkins K.L."/>
            <person name="Nierman W.C."/>
            <person name="Hazen A."/>
            <person name="Cline R.T."/>
            <person name="Redmond C."/>
            <person name="Thwaite J.E."/>
            <person name="White O."/>
            <person name="Salzberg S.L."/>
            <person name="Thomason B."/>
            <person name="Friedlander A.M."/>
            <person name="Koehler T.M."/>
            <person name="Hanna P.C."/>
            <person name="Kolstoe A.-B."/>
            <person name="Fraser C.M."/>
        </authorList>
    </citation>
    <scope>NUCLEOTIDE SEQUENCE [LARGE SCALE GENOMIC DNA]</scope>
    <source>
        <strain>Ames / isolate Porton</strain>
    </source>
</reference>
<reference key="2">
    <citation type="journal article" date="2009" name="J. Bacteriol.">
        <title>The complete genome sequence of Bacillus anthracis Ames 'Ancestor'.</title>
        <authorList>
            <person name="Ravel J."/>
            <person name="Jiang L."/>
            <person name="Stanley S.T."/>
            <person name="Wilson M.R."/>
            <person name="Decker R.S."/>
            <person name="Read T.D."/>
            <person name="Worsham P."/>
            <person name="Keim P.S."/>
            <person name="Salzberg S.L."/>
            <person name="Fraser-Liggett C.M."/>
            <person name="Rasko D.A."/>
        </authorList>
    </citation>
    <scope>NUCLEOTIDE SEQUENCE [LARGE SCALE GENOMIC DNA]</scope>
    <source>
        <strain>Ames ancestor</strain>
    </source>
</reference>
<reference key="3">
    <citation type="submission" date="2004-01" db="EMBL/GenBank/DDBJ databases">
        <title>Complete genome sequence of Bacillus anthracis Sterne.</title>
        <authorList>
            <person name="Brettin T.S."/>
            <person name="Bruce D."/>
            <person name="Challacombe J.F."/>
            <person name="Gilna P."/>
            <person name="Han C."/>
            <person name="Hill K."/>
            <person name="Hitchcock P."/>
            <person name="Jackson P."/>
            <person name="Keim P."/>
            <person name="Longmire J."/>
            <person name="Lucas S."/>
            <person name="Okinaka R."/>
            <person name="Richardson P."/>
            <person name="Rubin E."/>
            <person name="Tice H."/>
        </authorList>
    </citation>
    <scope>NUCLEOTIDE SEQUENCE [LARGE SCALE GENOMIC DNA]</scope>
    <source>
        <strain>Sterne</strain>
    </source>
</reference>
<gene>
    <name type="ordered locus">BA_4378</name>
    <name type="ordered locus">GBAA_4378</name>
    <name type="ordered locus">BAS4061</name>
</gene>
<accession>Q81M74</accession>
<accession>Q6HTM7</accession>
<accession>Q6KMW8</accession>
<dbReference type="EMBL" id="AE016879">
    <property type="protein sequence ID" value="AAP28094.1"/>
    <property type="molecule type" value="Genomic_DNA"/>
</dbReference>
<dbReference type="EMBL" id="AE017334">
    <property type="protein sequence ID" value="AAT33497.2"/>
    <property type="molecule type" value="Genomic_DNA"/>
</dbReference>
<dbReference type="EMBL" id="AE017225">
    <property type="protein sequence ID" value="AAT56362.1"/>
    <property type="molecule type" value="Genomic_DNA"/>
</dbReference>
<dbReference type="RefSeq" id="NP_846608.1">
    <property type="nucleotide sequence ID" value="NC_003997.3"/>
</dbReference>
<dbReference type="RefSeq" id="YP_030311.1">
    <property type="nucleotide sequence ID" value="NC_005945.1"/>
</dbReference>
<dbReference type="SMR" id="Q81M74"/>
<dbReference type="STRING" id="261594.GBAA_4378"/>
<dbReference type="DNASU" id="1087609"/>
<dbReference type="KEGG" id="ban:BA_4378"/>
<dbReference type="KEGG" id="banh:HYU01_21370"/>
<dbReference type="KEGG" id="bar:GBAA_4378"/>
<dbReference type="KEGG" id="bat:BAS4061"/>
<dbReference type="PATRIC" id="fig|198094.11.peg.4347"/>
<dbReference type="eggNOG" id="ENOG502ZBVN">
    <property type="taxonomic scope" value="Bacteria"/>
</dbReference>
<dbReference type="HOGENOM" id="CLU_132521_0_0_9"/>
<dbReference type="OMA" id="CGCAAAN"/>
<dbReference type="Proteomes" id="UP000000427">
    <property type="component" value="Chromosome"/>
</dbReference>
<dbReference type="Proteomes" id="UP000000594">
    <property type="component" value="Chromosome"/>
</dbReference>
<dbReference type="GO" id="GO:0045454">
    <property type="term" value="P:cell redox homeostasis"/>
    <property type="evidence" value="ECO:0000250"/>
    <property type="project" value="UniProtKB"/>
</dbReference>
<dbReference type="Gene3D" id="3.40.30.10">
    <property type="entry name" value="Glutaredoxin"/>
    <property type="match status" value="1"/>
</dbReference>
<dbReference type="InterPro" id="IPR009474">
    <property type="entry name" value="BrxB/BrxA"/>
</dbReference>
<dbReference type="NCBIfam" id="TIGR04191">
    <property type="entry name" value="YphP_YqiW"/>
    <property type="match status" value="1"/>
</dbReference>
<dbReference type="PANTHER" id="PTHR40052:SF1">
    <property type="entry name" value="BACILLIREDOXIN BRXB"/>
    <property type="match status" value="1"/>
</dbReference>
<dbReference type="PANTHER" id="PTHR40052">
    <property type="entry name" value="UPF0403 PROTEIN YQIW-RELATED"/>
    <property type="match status" value="1"/>
</dbReference>
<dbReference type="Pfam" id="PF06491">
    <property type="entry name" value="Disulph_isomer"/>
    <property type="match status" value="1"/>
</dbReference>
<keyword id="KW-1185">Reference proteome</keyword>
<name>Y4378_BACAN</name>
<protein>
    <recommendedName>
        <fullName evidence="1">Bacilliredoxin BA_4378/GBAA_4378/BAS4061</fullName>
    </recommendedName>
</protein>
<proteinExistence type="inferred from homology"/>
<evidence type="ECO:0000305" key="1"/>